<dbReference type="EMBL" id="X62844">
    <property type="protein sequence ID" value="CAA44662.1"/>
    <property type="molecule type" value="Genomic_DNA"/>
</dbReference>
<dbReference type="SMR" id="Q02274"/>
<dbReference type="Proteomes" id="UP000000469">
    <property type="component" value="Genome"/>
</dbReference>
<dbReference type="GO" id="GO:0042025">
    <property type="term" value="C:host cell nucleus"/>
    <property type="evidence" value="ECO:0007669"/>
    <property type="project" value="UniProtKB-SubCell"/>
</dbReference>
<dbReference type="GO" id="GO:0039620">
    <property type="term" value="C:T=7 icosahedral viral capsid"/>
    <property type="evidence" value="ECO:0007669"/>
    <property type="project" value="UniProtKB-UniRule"/>
</dbReference>
<dbReference type="GO" id="GO:0005198">
    <property type="term" value="F:structural molecule activity"/>
    <property type="evidence" value="ECO:0007669"/>
    <property type="project" value="UniProtKB-UniRule"/>
</dbReference>
<dbReference type="GO" id="GO:0075509">
    <property type="term" value="P:endocytosis involved in viral entry into host cell"/>
    <property type="evidence" value="ECO:0007669"/>
    <property type="project" value="UniProtKB-KW"/>
</dbReference>
<dbReference type="GO" id="GO:0019062">
    <property type="term" value="P:virion attachment to host cell"/>
    <property type="evidence" value="ECO:0007669"/>
    <property type="project" value="UniProtKB-UniRule"/>
</dbReference>
<dbReference type="Gene3D" id="2.60.175.20">
    <property type="entry name" value="Major capsid L1 (late) superfamily, Papillomavirus"/>
    <property type="match status" value="2"/>
</dbReference>
<dbReference type="HAMAP" id="MF_04002">
    <property type="entry name" value="PPV_L1"/>
    <property type="match status" value="1"/>
</dbReference>
<dbReference type="InterPro" id="IPR002210">
    <property type="entry name" value="Capsid_L1_Papillomavir"/>
</dbReference>
<dbReference type="InterPro" id="IPR036973">
    <property type="entry name" value="Capsid_L1_sf_Papillomavir"/>
</dbReference>
<dbReference type="InterPro" id="IPR011222">
    <property type="entry name" value="dsDNA_vir_gr_I_capsid"/>
</dbReference>
<dbReference type="Pfam" id="PF00500">
    <property type="entry name" value="Late_protein_L1"/>
    <property type="match status" value="1"/>
</dbReference>
<dbReference type="PRINTS" id="PR00865">
    <property type="entry name" value="HPVCAPSIDL1"/>
</dbReference>
<dbReference type="SUPFAM" id="SSF88648">
    <property type="entry name" value="Group I dsDNA viruses"/>
    <property type="match status" value="1"/>
</dbReference>
<feature type="chain" id="PRO_0000133554" description="Major capsid protein L1">
    <location>
        <begin position="1"/>
        <end position="502"/>
    </location>
</feature>
<feature type="region of interest" description="Disordered" evidence="2">
    <location>
        <begin position="478"/>
        <end position="502"/>
    </location>
</feature>
<feature type="compositionally biased region" description="Low complexity" evidence="2">
    <location>
        <begin position="478"/>
        <end position="494"/>
    </location>
</feature>
<feature type="disulfide bond" description="Interchain (with C-426)" evidence="1">
    <location>
        <position position="172"/>
    </location>
</feature>
<feature type="disulfide bond" description="Interchain (with C-172)" evidence="1">
    <location>
        <position position="426"/>
    </location>
</feature>
<accession>Q02274</accession>
<sequence length="502" mass="55718">MWRPSDNKLYVPPPAPVSKVITTDAYVTRTKIFYHASSSRLLAVGNPYFPIRKGNKTIVPKVSGFQFRVFKIVLPDPNKFALPDTSIFDSTSQRLVWACIGLEVGRGQPLGVGISGHPLLNKFDDVENSASYAVNPGQDNRVNVAMDYKQTQLCLVGCAPPLGEHWGKGTQCSGVSVQDGDCPPLELVTSVIQDGDMVDTGFGAMDFAQLQSNKSDVPLDICTATCKYPDYLQMAADPYGDRLFFSLRKEQMFARHFFNRAGTVGEQIPEDLLVKGTTSRATVSSTIYFNTPSGSLVSSEAQLFNKPYWLHKAQGHNNGICWGNTLFVTVVDTTRSTNMTVCASTTSSPSATYTASEYKQYMRHVEEFDLQFIFQLCSIKLTAEVMAYIHTMNPTVLEEWNFGLSPPPNGTLEDTYRYVQSQAITCQKPTPDKEKQDPYAGLSFWEVNLKEKFSSELDQYPLGRKFLLQTGVQTTSFARAGTKRAASTSSSTPTTRKRVKRK</sequence>
<protein>
    <recommendedName>
        <fullName evidence="1">Major capsid protein L1</fullName>
    </recommendedName>
</protein>
<organismHost>
    <name type="scientific">Pan paniscus</name>
    <name type="common">Pygmy chimpanzee</name>
    <name type="synonym">Bonobo</name>
    <dbReference type="NCBI Taxonomy" id="9597"/>
</organismHost>
<evidence type="ECO:0000255" key="1">
    <source>
        <dbReference type="HAMAP-Rule" id="MF_04002"/>
    </source>
</evidence>
<evidence type="ECO:0000256" key="2">
    <source>
        <dbReference type="SAM" id="MobiDB-lite"/>
    </source>
</evidence>
<proteinExistence type="inferred from homology"/>
<gene>
    <name evidence="1" type="primary">L1</name>
</gene>
<name>VL1_PCPV1</name>
<reference key="1">
    <citation type="journal article" date="1992" name="Virology">
        <title>Human papillomavirus type 13 and pygmy chimpanzee papillomavirus type 1: comparison of the genome organizations.</title>
        <authorList>
            <person name="van Ranst M."/>
            <person name="Fuse A."/>
            <person name="Fiten P."/>
            <person name="Beuken E."/>
            <person name="Pfister H."/>
            <person name="Burk R.D."/>
            <person name="Opdenakker G."/>
        </authorList>
    </citation>
    <scope>NUCLEOTIDE SEQUENCE [GENOMIC DNA]</scope>
</reference>
<organism>
    <name type="scientific">Pygmy chimpanzee papillomavirus type 1</name>
    <name type="common">PCPV-1</name>
    <dbReference type="NCBI Taxonomy" id="10576"/>
    <lineage>
        <taxon>Viruses</taxon>
        <taxon>Monodnaviria</taxon>
        <taxon>Shotokuvirae</taxon>
        <taxon>Cossaviricota</taxon>
        <taxon>Papovaviricetes</taxon>
        <taxon>Zurhausenvirales</taxon>
        <taxon>Papillomaviridae</taxon>
        <taxon>Firstpapillomavirinae</taxon>
        <taxon>Alphapapillomavirus</taxon>
        <taxon>Alphapapillomavirus 10</taxon>
    </lineage>
</organism>
<comment type="function">
    <text evidence="1">Forms an icosahedral capsid with a T=7 symmetry and a 50 nm diameter. The capsid is composed of 72 pentamers linked to each other by disulfide bonds and associated with L2 proteins. Binds to heparan sulfate proteoglycans on cell surface of basal layer keratinocytes to provide initial virion attachment. This binding mediates a conformational change in the virus capsid that facilitates efficient infection. The virion enters the host cell via endocytosis. During virus trafficking, L1 protein dissociates from the viral DNA and the genomic DNA is released to the host nucleus. The virion assembly takes place within the cell nucleus. Encapsulates the genomic DNA together with protein L2.</text>
</comment>
<comment type="subunit">
    <text evidence="1">Self-assembles into homopentamers. The capsid has an icosahedral symmetry and consists of 72 capsomers, with each capsomer being a pentamer of L1. Interacts with the minor capsid protein L2; this interaction is necessary for viral genome encapsidation. Interacts with protein E2; this interaction enhances E2-dependent replication and transcription activation.</text>
</comment>
<comment type="subcellular location">
    <subcellularLocation>
        <location evidence="1">Virion</location>
    </subcellularLocation>
    <subcellularLocation>
        <location evidence="1">Host nucleus</location>
    </subcellularLocation>
</comment>
<comment type="similarity">
    <text evidence="1">Belongs to the papillomaviridae L1 protein family.</text>
</comment>
<keyword id="KW-0167">Capsid protein</keyword>
<keyword id="KW-1015">Disulfide bond</keyword>
<keyword id="KW-1048">Host nucleus</keyword>
<keyword id="KW-0945">Host-virus interaction</keyword>
<keyword id="KW-0426">Late protein</keyword>
<keyword id="KW-1185">Reference proteome</keyword>
<keyword id="KW-1145">T=7 icosahedral capsid protein</keyword>
<keyword id="KW-1161">Viral attachment to host cell</keyword>
<keyword id="KW-1162">Viral penetration into host cytoplasm</keyword>
<keyword id="KW-0946">Virion</keyword>
<keyword id="KW-1164">Virus endocytosis by host</keyword>
<keyword id="KW-1160">Virus entry into host cell</keyword>